<comment type="function">
    <text evidence="3">Promotes tail assembly by creating a scaffold for the tail tube proteins. Tail assembly proteins G and GT probably wrap the linear tape measure protein to create a tail assembly scaffold. This allows the polymerization of the tail tube protein, during which G and GT are released, therefore they are absent in the mature virion. The tail assembly protein GT is produced by a rare -1 ribosomal frameshift. The ratio of translated G/GT is about 20, and this ratio is important for proper tail assembly.</text>
</comment>
<comment type="subunit">
    <text evidence="3">Interacts with the tail assembly protein GT and the tape measure protein.</text>
</comment>
<comment type="subcellular location">
    <subcellularLocation>
        <location evidence="3">Host cytoplasm</location>
    </subcellularLocation>
</comment>
<comment type="alternative products">
    <event type="ribosomal frameshifting"/>
    <isoform>
        <id>O64328-1</id>
        <name>Tail assembly protein G</name>
        <sequence type="displayed"/>
    </isoform>
    <isoform>
        <id>O64329-1</id>
        <name>Tail assembly protein GT</name>
        <sequence type="external"/>
    </isoform>
    <text evidence="1">The tail assembly protein GT is produced by a rare -1 ribosomal frameshift. This expression strategy assures a fixed ration of G/GT.</text>
</comment>
<comment type="miscellaneous">
    <molecule>Isoform Tail assembly protein G</molecule>
    <text evidence="2">Main product of the GT gene, representing 96% of the translated protein.</text>
</comment>
<comment type="similarity">
    <text evidence="3">Belongs to the lambda-like tail assembly protein family.</text>
</comment>
<reference key="1">
    <citation type="journal article" date="2000" name="J. Mol. Biol.">
        <title>Genomic sequence and analysis of the atypical temperate bacteriophage N15.</title>
        <authorList>
            <person name="Ravin V."/>
            <person name="Ravin N."/>
            <person name="Casjens S."/>
            <person name="Ford M.E."/>
            <person name="Hatfull G.F."/>
            <person name="Hendrix R.W."/>
        </authorList>
    </citation>
    <scope>NUCLEOTIDE SEQUENCE [LARGE SCALE GENOMIC DNA]</scope>
    <scope>IDENTIFICATION</scope>
</reference>
<organismHost>
    <name type="scientific">Escherichia coli</name>
    <dbReference type="NCBI Taxonomy" id="562"/>
</organismHost>
<accession>O64328</accession>
<keyword id="KW-1035">Host cytoplasm</keyword>
<keyword id="KW-0426">Late protein</keyword>
<keyword id="KW-1185">Reference proteome</keyword>
<keyword id="KW-0688">Ribosomal frameshifting</keyword>
<keyword id="KW-1188">Viral release from host cell</keyword>
<keyword id="KW-1245">Viral tail assembly</keyword>
<organism evidence="7">
    <name type="scientific">Escherichia phage N15</name>
    <name type="common">Bacteriophage N15</name>
    <dbReference type="NCBI Taxonomy" id="1604876"/>
    <lineage>
        <taxon>Viruses</taxon>
        <taxon>Duplodnaviria</taxon>
        <taxon>Heunggongvirae</taxon>
        <taxon>Uroviricota</taxon>
        <taxon>Caudoviricetes</taxon>
        <taxon>Ravinvirus</taxon>
        <taxon>Ravinvirus N15</taxon>
    </lineage>
</organism>
<protein>
    <recommendedName>
        <fullName evidence="3 5">Tail assembly protein G</fullName>
    </recommendedName>
    <alternativeName>
        <fullName evidence="1">Gene product 14</fullName>
        <shortName evidence="1">gp14</shortName>
    </alternativeName>
    <alternativeName>
        <fullName evidence="3">Gene product G</fullName>
        <shortName evidence="3">gpG</shortName>
    </alternativeName>
    <alternativeName>
        <fullName evidence="3">Minor tail protein G</fullName>
    </alternativeName>
    <alternativeName>
        <fullName evidence="3">Tail assembly chaperone</fullName>
        <shortName evidence="3">TAC</shortName>
    </alternativeName>
</protein>
<dbReference type="EMBL" id="AF064539">
    <property type="protein sequence ID" value="AAC19045.1"/>
    <property type="molecule type" value="Genomic_DNA"/>
</dbReference>
<dbReference type="PIR" id="T13100">
    <property type="entry name" value="T13100"/>
</dbReference>
<dbReference type="RefSeq" id="NP_046909.1">
    <molecule id="O64328-1"/>
    <property type="nucleotide sequence ID" value="NC_001901.1"/>
</dbReference>
<dbReference type="GeneID" id="1261653"/>
<dbReference type="KEGG" id="vg:1261653"/>
<dbReference type="Proteomes" id="UP000002132">
    <property type="component" value="Genome"/>
</dbReference>
<dbReference type="GO" id="GO:0030430">
    <property type="term" value="C:host cell cytoplasm"/>
    <property type="evidence" value="ECO:0007669"/>
    <property type="project" value="UniProtKB-SubCell"/>
</dbReference>
<dbReference type="GO" id="GO:0098003">
    <property type="term" value="P:viral tail assembly"/>
    <property type="evidence" value="ECO:0007669"/>
    <property type="project" value="UniProtKB-UniRule"/>
</dbReference>
<dbReference type="GO" id="GO:0075523">
    <property type="term" value="P:viral translational frameshifting"/>
    <property type="evidence" value="ECO:0007669"/>
    <property type="project" value="UniProtKB-KW"/>
</dbReference>
<dbReference type="HAMAP" id="MF_04134">
    <property type="entry name" value="GT_LAMBD"/>
    <property type="match status" value="1"/>
</dbReference>
<dbReference type="InterPro" id="IPR010027">
    <property type="entry name" value="Tail_assembly_G"/>
</dbReference>
<dbReference type="InterPro" id="IPR043704">
    <property type="entry name" value="Tail_assembly_GT"/>
</dbReference>
<dbReference type="NCBIfam" id="TIGR01674">
    <property type="entry name" value="phage_lambda_G"/>
    <property type="match status" value="1"/>
</dbReference>
<dbReference type="Pfam" id="PF06894">
    <property type="entry name" value="Phage_TAC_2"/>
    <property type="match status" value="1"/>
</dbReference>
<feature type="chain" id="PRO_0000432905" description="Tail assembly protein G">
    <location>
        <begin position="1"/>
        <end position="140"/>
    </location>
</feature>
<feature type="region of interest" description="Disordered" evidence="4">
    <location>
        <begin position="114"/>
        <end position="140"/>
    </location>
</feature>
<name>G_BPN15</name>
<sequence>MFLKSELLECNGSSVTLFQLSALQRIEHLEYLKQLEAVEVGDFQAAITFTVKSGAYLVAMSLWHGHPLKGSQGENAAAEVAKIQDEVMQTWPTELVAEAEYKVKLLSGMIAPVIDEPTSSGEERNEPAEPVTAEKPSPVS</sequence>
<gene>
    <name evidence="6" type="primary">gene 14</name>
</gene>
<proteinExistence type="inferred from homology"/>
<evidence type="ECO:0000250" key="1">
    <source>
        <dbReference type="UniProtKB" id="P03734"/>
    </source>
</evidence>
<evidence type="ECO:0000250" key="2">
    <source>
        <dbReference type="UniProtKB" id="P03735"/>
    </source>
</evidence>
<evidence type="ECO:0000255" key="3">
    <source>
        <dbReference type="HAMAP-Rule" id="MF_04134"/>
    </source>
</evidence>
<evidence type="ECO:0000256" key="4">
    <source>
        <dbReference type="SAM" id="MobiDB-lite"/>
    </source>
</evidence>
<evidence type="ECO:0000303" key="5">
    <source>
    </source>
</evidence>
<evidence type="ECO:0000312" key="6">
    <source>
        <dbReference type="EMBL" id="AAC19045.1"/>
    </source>
</evidence>
<evidence type="ECO:0000312" key="7">
    <source>
        <dbReference type="Proteomes" id="UP000002132"/>
    </source>
</evidence>